<gene>
    <name evidence="1" type="primary">lpxK</name>
    <name type="ordered locus">Sputcn32_1558</name>
</gene>
<dbReference type="EC" id="2.7.1.130" evidence="1"/>
<dbReference type="EMBL" id="CP000681">
    <property type="protein sequence ID" value="ABP75283.1"/>
    <property type="molecule type" value="Genomic_DNA"/>
</dbReference>
<dbReference type="SMR" id="A4Y5Q0"/>
<dbReference type="STRING" id="319224.Sputcn32_1558"/>
<dbReference type="KEGG" id="spc:Sputcn32_1558"/>
<dbReference type="eggNOG" id="COG1663">
    <property type="taxonomic scope" value="Bacteria"/>
</dbReference>
<dbReference type="HOGENOM" id="CLU_038816_2_0_6"/>
<dbReference type="UniPathway" id="UPA00359">
    <property type="reaction ID" value="UER00482"/>
</dbReference>
<dbReference type="GO" id="GO:0005886">
    <property type="term" value="C:plasma membrane"/>
    <property type="evidence" value="ECO:0007669"/>
    <property type="project" value="TreeGrafter"/>
</dbReference>
<dbReference type="GO" id="GO:0005524">
    <property type="term" value="F:ATP binding"/>
    <property type="evidence" value="ECO:0007669"/>
    <property type="project" value="UniProtKB-UniRule"/>
</dbReference>
<dbReference type="GO" id="GO:0009029">
    <property type="term" value="F:tetraacyldisaccharide 4'-kinase activity"/>
    <property type="evidence" value="ECO:0007669"/>
    <property type="project" value="UniProtKB-UniRule"/>
</dbReference>
<dbReference type="GO" id="GO:0009245">
    <property type="term" value="P:lipid A biosynthetic process"/>
    <property type="evidence" value="ECO:0007669"/>
    <property type="project" value="UniProtKB-UniRule"/>
</dbReference>
<dbReference type="GO" id="GO:0009244">
    <property type="term" value="P:lipopolysaccharide core region biosynthetic process"/>
    <property type="evidence" value="ECO:0007669"/>
    <property type="project" value="TreeGrafter"/>
</dbReference>
<dbReference type="HAMAP" id="MF_00409">
    <property type="entry name" value="LpxK"/>
    <property type="match status" value="1"/>
</dbReference>
<dbReference type="InterPro" id="IPR003758">
    <property type="entry name" value="LpxK"/>
</dbReference>
<dbReference type="InterPro" id="IPR027417">
    <property type="entry name" value="P-loop_NTPase"/>
</dbReference>
<dbReference type="NCBIfam" id="TIGR00682">
    <property type="entry name" value="lpxK"/>
    <property type="match status" value="1"/>
</dbReference>
<dbReference type="PANTHER" id="PTHR42724">
    <property type="entry name" value="TETRAACYLDISACCHARIDE 4'-KINASE"/>
    <property type="match status" value="1"/>
</dbReference>
<dbReference type="PANTHER" id="PTHR42724:SF1">
    <property type="entry name" value="TETRAACYLDISACCHARIDE 4'-KINASE, MITOCHONDRIAL-RELATED"/>
    <property type="match status" value="1"/>
</dbReference>
<dbReference type="Pfam" id="PF02606">
    <property type="entry name" value="LpxK"/>
    <property type="match status" value="1"/>
</dbReference>
<dbReference type="SUPFAM" id="SSF52540">
    <property type="entry name" value="P-loop containing nucleoside triphosphate hydrolases"/>
    <property type="match status" value="1"/>
</dbReference>
<proteinExistence type="inferred from homology"/>
<accession>A4Y5Q0</accession>
<organism>
    <name type="scientific">Shewanella putrefaciens (strain CN-32 / ATCC BAA-453)</name>
    <dbReference type="NCBI Taxonomy" id="319224"/>
    <lineage>
        <taxon>Bacteria</taxon>
        <taxon>Pseudomonadati</taxon>
        <taxon>Pseudomonadota</taxon>
        <taxon>Gammaproteobacteria</taxon>
        <taxon>Alteromonadales</taxon>
        <taxon>Shewanellaceae</taxon>
        <taxon>Shewanella</taxon>
    </lineage>
</organism>
<comment type="function">
    <text evidence="1">Transfers the gamma-phosphate of ATP to the 4'-position of a tetraacyldisaccharide 1-phosphate intermediate (termed DS-1-P) to form tetraacyldisaccharide 1,4'-bis-phosphate (lipid IVA).</text>
</comment>
<comment type="catalytic activity">
    <reaction evidence="1">
        <text>a lipid A disaccharide + ATP = a lipid IVA + ADP + H(+)</text>
        <dbReference type="Rhea" id="RHEA:67840"/>
        <dbReference type="ChEBI" id="CHEBI:15378"/>
        <dbReference type="ChEBI" id="CHEBI:30616"/>
        <dbReference type="ChEBI" id="CHEBI:176343"/>
        <dbReference type="ChEBI" id="CHEBI:176425"/>
        <dbReference type="ChEBI" id="CHEBI:456216"/>
        <dbReference type="EC" id="2.7.1.130"/>
    </reaction>
</comment>
<comment type="pathway">
    <text evidence="1">Glycolipid biosynthesis; lipid IV(A) biosynthesis; lipid IV(A) from (3R)-3-hydroxytetradecanoyl-[acyl-carrier-protein] and UDP-N-acetyl-alpha-D-glucosamine: step 6/6.</text>
</comment>
<comment type="similarity">
    <text evidence="1">Belongs to the LpxK family.</text>
</comment>
<protein>
    <recommendedName>
        <fullName evidence="1">Tetraacyldisaccharide 4'-kinase</fullName>
        <ecNumber evidence="1">2.7.1.130</ecNumber>
    </recommendedName>
    <alternativeName>
        <fullName evidence="1">Lipid A 4'-kinase</fullName>
    </alternativeName>
</protein>
<name>LPXK_SHEPC</name>
<feature type="chain" id="PRO_0000340862" description="Tetraacyldisaccharide 4'-kinase">
    <location>
        <begin position="1"/>
        <end position="337"/>
    </location>
</feature>
<feature type="binding site" evidence="1">
    <location>
        <begin position="58"/>
        <end position="65"/>
    </location>
    <ligand>
        <name>ATP</name>
        <dbReference type="ChEBI" id="CHEBI:30616"/>
    </ligand>
</feature>
<evidence type="ECO:0000255" key="1">
    <source>
        <dbReference type="HAMAP-Rule" id="MF_00409"/>
    </source>
</evidence>
<keyword id="KW-0067">ATP-binding</keyword>
<keyword id="KW-0418">Kinase</keyword>
<keyword id="KW-0441">Lipid A biosynthesis</keyword>
<keyword id="KW-0444">Lipid biosynthesis</keyword>
<keyword id="KW-0443">Lipid metabolism</keyword>
<keyword id="KW-0547">Nucleotide-binding</keyword>
<keyword id="KW-0808">Transferase</keyword>
<sequence length="337" mass="36990">MQTLVNKIWYQGHPLQWLLLPLSFVFGFITFVRRGLFQLGLKAQTILPVPVIVVGNITVGGSGKTPMVIYLIELLRAHGFNPGVISRGYGANIDGVKQVAYNASATDVGDEPAMIVARSGVPMVVGSKRVEAANVLIAEHGVDVIICDDGLQHYALGRDIELVVIDGQRRLGNEYLLPAGPLREGPWRLKDVDFVVINGGNADVGQFEMQLAPTQVKAVDGNIITTDFDKSQPLVAMAGIGNPTRFFDSLQAQGYQVVLSHGFDDHQAYDKKQLCDLAKDLPLMMTEKDAVKCRDFAQENWWYLAVNAKLSPQFDEQLLSRLHEVVAAKQGNSHGIR</sequence>
<reference key="1">
    <citation type="submission" date="2007-04" db="EMBL/GenBank/DDBJ databases">
        <title>Complete sequence of Shewanella putrefaciens CN-32.</title>
        <authorList>
            <consortium name="US DOE Joint Genome Institute"/>
            <person name="Copeland A."/>
            <person name="Lucas S."/>
            <person name="Lapidus A."/>
            <person name="Barry K."/>
            <person name="Detter J.C."/>
            <person name="Glavina del Rio T."/>
            <person name="Hammon N."/>
            <person name="Israni S."/>
            <person name="Dalin E."/>
            <person name="Tice H."/>
            <person name="Pitluck S."/>
            <person name="Chain P."/>
            <person name="Malfatti S."/>
            <person name="Shin M."/>
            <person name="Vergez L."/>
            <person name="Schmutz J."/>
            <person name="Larimer F."/>
            <person name="Land M."/>
            <person name="Hauser L."/>
            <person name="Kyrpides N."/>
            <person name="Mikhailova N."/>
            <person name="Romine M.F."/>
            <person name="Fredrickson J."/>
            <person name="Tiedje J."/>
            <person name="Richardson P."/>
        </authorList>
    </citation>
    <scope>NUCLEOTIDE SEQUENCE [LARGE SCALE GENOMIC DNA]</scope>
    <source>
        <strain>CN-32 / ATCC BAA-453</strain>
    </source>
</reference>